<keyword id="KW-0002">3D-structure</keyword>
<keyword id="KW-0025">Alternative splicing</keyword>
<keyword id="KW-0095">Blood group antigen</keyword>
<keyword id="KW-1003">Cell membrane</keyword>
<keyword id="KW-0903">Direct protein sequencing</keyword>
<keyword id="KW-0325">Glycoprotein</keyword>
<keyword id="KW-1183">Host cell receptor for virus entry</keyword>
<keyword id="KW-0945">Host-virus interaction</keyword>
<keyword id="KW-0472">Membrane</keyword>
<keyword id="KW-0597">Phosphoprotein</keyword>
<keyword id="KW-1267">Proteomics identification</keyword>
<keyword id="KW-0675">Receptor</keyword>
<keyword id="KW-1185">Reference proteome</keyword>
<keyword id="KW-0730">Sialic acid</keyword>
<keyword id="KW-0732">Signal</keyword>
<keyword id="KW-0812">Transmembrane</keyword>
<keyword id="KW-1133">Transmembrane helix</keyword>
<gene>
    <name evidence="39" type="primary">GYPA</name>
    <name type="synonym">GPA</name>
    <name evidence="39" type="synonym">MNS</name>
</gene>
<accession>P02724</accession>
<accession>A0A0C4DFT7</accession>
<accession>A8K3E6</accession>
<accession>B8Q182</accession>
<accession>B8Q185</accession>
<accession>Q9BS51</accession>
<reference key="1">
    <citation type="journal article" date="1986" name="Proc. Natl. Acad. Sci. U.S.A.">
        <title>Isolation and characterization of human glycophorin A cDNA clones by a synthetic oligonucleotide approach: nucleotide sequence and mRNA structure.</title>
        <authorList>
            <person name="Siebert P.D."/>
            <person name="Fukuda M."/>
        </authorList>
    </citation>
    <scope>NUCLEOTIDE SEQUENCE [MRNA] (ISOFORM 1)</scope>
    <scope>VARIANTS ALA-13; SER-20 AND GLY-24</scope>
</reference>
<reference key="2">
    <citation type="journal article" date="1988" name="Biochem. J.">
        <title>Isolation of cDNA clones for human erythrocyte membrane sialoglycoproteins alpha and delta.</title>
        <authorList>
            <person name="Tate C.G."/>
            <person name="Tanner M.J.A."/>
        </authorList>
    </citation>
    <scope>NUCLEOTIDE SEQUENCE [MRNA] (ISOFORM 1)</scope>
</reference>
<reference key="3">
    <citation type="journal article" date="1989" name="Proc. Natl. Acad. Sci. U.S.A.">
        <title>Structural organization of glycophorin A and B genes: glycophorin B gene evolved by homologous recombination at Alu repeat sequences.</title>
        <authorList>
            <person name="Kudo S."/>
            <person name="Fukuda M."/>
        </authorList>
    </citation>
    <scope>NUCLEOTIDE SEQUENCE [GENOMIC DNA]</scope>
    <scope>VARIANTS ALA-13; SER-20 AND GLY-24</scope>
</reference>
<reference key="4">
    <citation type="journal article" date="1990" name="Nucleic Acids Res.">
        <title>The mechanism of production of multiple mRNAs for human glycophorin A.</title>
        <authorList>
            <person name="Jawad K."/>
            <person name="Burness T.H."/>
        </authorList>
    </citation>
    <scope>NUCLEOTIDE SEQUENCE [MRNA] (ISOFORM 1)</scope>
    <scope>VARIANTS ALA-13; SER-20 AND GLY-24</scope>
    <source>
        <tissue>Blood</tissue>
    </source>
</reference>
<reference key="5">
    <citation type="journal article" date="1994" name="J. Biochem.">
        <title>Characterization of glycophorin A transcripts: control by the common erythroid-specific promoter and alternative usage of different polyadenylation signals.</title>
        <authorList>
            <person name="Kudo S."/>
            <person name="Onda M."/>
            <person name="Fukuda M."/>
        </authorList>
    </citation>
    <scope>NUCLEOTIDE SEQUENCE [MRNA] (ISOFORM 1)</scope>
    <scope>VARIANTS ALA-13; SER-20 AND GLY-24</scope>
    <source>
        <tissue>Blood</tissue>
    </source>
</reference>
<reference key="6">
    <citation type="submission" date="2009-12" db="EMBL/GenBank/DDBJ databases">
        <title>Extensive alternative splicing of glycophorins in Southeast Asian populations.</title>
        <authorList>
            <person name="Hsu K."/>
            <person name="Huang S.-Y."/>
            <person name="Chi N."/>
            <person name="Lin M."/>
        </authorList>
    </citation>
    <scope>NUCLEOTIDE SEQUENCE [MRNA] (ISOFORM 2)</scope>
    <scope>ALTERNATIVE SPLICING</scope>
    <source>
        <tissue>Blood</tissue>
    </source>
</reference>
<reference key="7">
    <citation type="journal article" date="2004" name="Nat. Genet.">
        <title>Complete sequencing and characterization of 21,243 full-length human cDNAs.</title>
        <authorList>
            <person name="Ota T."/>
            <person name="Suzuki Y."/>
            <person name="Nishikawa T."/>
            <person name="Otsuki T."/>
            <person name="Sugiyama T."/>
            <person name="Irie R."/>
            <person name="Wakamatsu A."/>
            <person name="Hayashi K."/>
            <person name="Sato H."/>
            <person name="Nagai K."/>
            <person name="Kimura K."/>
            <person name="Makita H."/>
            <person name="Sekine M."/>
            <person name="Obayashi M."/>
            <person name="Nishi T."/>
            <person name="Shibahara T."/>
            <person name="Tanaka T."/>
            <person name="Ishii S."/>
            <person name="Yamamoto J."/>
            <person name="Saito K."/>
            <person name="Kawai Y."/>
            <person name="Isono Y."/>
            <person name="Nakamura Y."/>
            <person name="Nagahari K."/>
            <person name="Murakami K."/>
            <person name="Yasuda T."/>
            <person name="Iwayanagi T."/>
            <person name="Wagatsuma M."/>
            <person name="Shiratori A."/>
            <person name="Sudo H."/>
            <person name="Hosoiri T."/>
            <person name="Kaku Y."/>
            <person name="Kodaira H."/>
            <person name="Kondo H."/>
            <person name="Sugawara M."/>
            <person name="Takahashi M."/>
            <person name="Kanda K."/>
            <person name="Yokoi T."/>
            <person name="Furuya T."/>
            <person name="Kikkawa E."/>
            <person name="Omura Y."/>
            <person name="Abe K."/>
            <person name="Kamihara K."/>
            <person name="Katsuta N."/>
            <person name="Sato K."/>
            <person name="Tanikawa M."/>
            <person name="Yamazaki M."/>
            <person name="Ninomiya K."/>
            <person name="Ishibashi T."/>
            <person name="Yamashita H."/>
            <person name="Murakawa K."/>
            <person name="Fujimori K."/>
            <person name="Tanai H."/>
            <person name="Kimata M."/>
            <person name="Watanabe M."/>
            <person name="Hiraoka S."/>
            <person name="Chiba Y."/>
            <person name="Ishida S."/>
            <person name="Ono Y."/>
            <person name="Takiguchi S."/>
            <person name="Watanabe S."/>
            <person name="Yosida M."/>
            <person name="Hotuta T."/>
            <person name="Kusano J."/>
            <person name="Kanehori K."/>
            <person name="Takahashi-Fujii A."/>
            <person name="Hara H."/>
            <person name="Tanase T.-O."/>
            <person name="Nomura Y."/>
            <person name="Togiya S."/>
            <person name="Komai F."/>
            <person name="Hara R."/>
            <person name="Takeuchi K."/>
            <person name="Arita M."/>
            <person name="Imose N."/>
            <person name="Musashino K."/>
            <person name="Yuuki H."/>
            <person name="Oshima A."/>
            <person name="Sasaki N."/>
            <person name="Aotsuka S."/>
            <person name="Yoshikawa Y."/>
            <person name="Matsunawa H."/>
            <person name="Ichihara T."/>
            <person name="Shiohata N."/>
            <person name="Sano S."/>
            <person name="Moriya S."/>
            <person name="Momiyama H."/>
            <person name="Satoh N."/>
            <person name="Takami S."/>
            <person name="Terashima Y."/>
            <person name="Suzuki O."/>
            <person name="Nakagawa S."/>
            <person name="Senoh A."/>
            <person name="Mizoguchi H."/>
            <person name="Goto Y."/>
            <person name="Shimizu F."/>
            <person name="Wakebe H."/>
            <person name="Hishigaki H."/>
            <person name="Watanabe T."/>
            <person name="Sugiyama A."/>
            <person name="Takemoto M."/>
            <person name="Kawakami B."/>
            <person name="Yamazaki M."/>
            <person name="Watanabe K."/>
            <person name="Kumagai A."/>
            <person name="Itakura S."/>
            <person name="Fukuzumi Y."/>
            <person name="Fujimori Y."/>
            <person name="Komiyama M."/>
            <person name="Tashiro H."/>
            <person name="Tanigami A."/>
            <person name="Fujiwara T."/>
            <person name="Ono T."/>
            <person name="Yamada K."/>
            <person name="Fujii Y."/>
            <person name="Ozaki K."/>
            <person name="Hirao M."/>
            <person name="Ohmori Y."/>
            <person name="Kawabata A."/>
            <person name="Hikiji T."/>
            <person name="Kobatake N."/>
            <person name="Inagaki H."/>
            <person name="Ikema Y."/>
            <person name="Okamoto S."/>
            <person name="Okitani R."/>
            <person name="Kawakami T."/>
            <person name="Noguchi S."/>
            <person name="Itoh T."/>
            <person name="Shigeta K."/>
            <person name="Senba T."/>
            <person name="Matsumura K."/>
            <person name="Nakajima Y."/>
            <person name="Mizuno T."/>
            <person name="Morinaga M."/>
            <person name="Sasaki M."/>
            <person name="Togashi T."/>
            <person name="Oyama M."/>
            <person name="Hata H."/>
            <person name="Watanabe M."/>
            <person name="Komatsu T."/>
            <person name="Mizushima-Sugano J."/>
            <person name="Satoh T."/>
            <person name="Shirai Y."/>
            <person name="Takahashi Y."/>
            <person name="Nakagawa K."/>
            <person name="Okumura K."/>
            <person name="Nagase T."/>
            <person name="Nomura N."/>
            <person name="Kikuchi H."/>
            <person name="Masuho Y."/>
            <person name="Yamashita R."/>
            <person name="Nakai K."/>
            <person name="Yada T."/>
            <person name="Nakamura Y."/>
            <person name="Ohara O."/>
            <person name="Isogai T."/>
            <person name="Sugano S."/>
        </authorList>
    </citation>
    <scope>NUCLEOTIDE SEQUENCE [LARGE SCALE MRNA] (ISOFORM 1)</scope>
    <scope>VARIANTS ALA-13; SER-20 AND GLY-24</scope>
    <source>
        <tissue>Kidney</tissue>
    </source>
</reference>
<reference key="8">
    <citation type="journal article" date="2005" name="Nature">
        <title>Generation and annotation of the DNA sequences of human chromosomes 2 and 4.</title>
        <authorList>
            <person name="Hillier L.W."/>
            <person name="Graves T.A."/>
            <person name="Fulton R.S."/>
            <person name="Fulton L.A."/>
            <person name="Pepin K.H."/>
            <person name="Minx P."/>
            <person name="Wagner-McPherson C."/>
            <person name="Layman D."/>
            <person name="Wylie K."/>
            <person name="Sekhon M."/>
            <person name="Becker M.C."/>
            <person name="Fewell G.A."/>
            <person name="Delehaunty K.D."/>
            <person name="Miner T.L."/>
            <person name="Nash W.E."/>
            <person name="Kremitzki C."/>
            <person name="Oddy L."/>
            <person name="Du H."/>
            <person name="Sun H."/>
            <person name="Bradshaw-Cordum H."/>
            <person name="Ali J."/>
            <person name="Carter J."/>
            <person name="Cordes M."/>
            <person name="Harris A."/>
            <person name="Isak A."/>
            <person name="van Brunt A."/>
            <person name="Nguyen C."/>
            <person name="Du F."/>
            <person name="Courtney L."/>
            <person name="Kalicki J."/>
            <person name="Ozersky P."/>
            <person name="Abbott S."/>
            <person name="Armstrong J."/>
            <person name="Belter E.A."/>
            <person name="Caruso L."/>
            <person name="Cedroni M."/>
            <person name="Cotton M."/>
            <person name="Davidson T."/>
            <person name="Desai A."/>
            <person name="Elliott G."/>
            <person name="Erb T."/>
            <person name="Fronick C."/>
            <person name="Gaige T."/>
            <person name="Haakenson W."/>
            <person name="Haglund K."/>
            <person name="Holmes A."/>
            <person name="Harkins R."/>
            <person name="Kim K."/>
            <person name="Kruchowski S.S."/>
            <person name="Strong C.M."/>
            <person name="Grewal N."/>
            <person name="Goyea E."/>
            <person name="Hou S."/>
            <person name="Levy A."/>
            <person name="Martinka S."/>
            <person name="Mead K."/>
            <person name="McLellan M.D."/>
            <person name="Meyer R."/>
            <person name="Randall-Maher J."/>
            <person name="Tomlinson C."/>
            <person name="Dauphin-Kohlberg S."/>
            <person name="Kozlowicz-Reilly A."/>
            <person name="Shah N."/>
            <person name="Swearengen-Shahid S."/>
            <person name="Snider J."/>
            <person name="Strong J.T."/>
            <person name="Thompson J."/>
            <person name="Yoakum M."/>
            <person name="Leonard S."/>
            <person name="Pearman C."/>
            <person name="Trani L."/>
            <person name="Radionenko M."/>
            <person name="Waligorski J.E."/>
            <person name="Wang C."/>
            <person name="Rock S.M."/>
            <person name="Tin-Wollam A.-M."/>
            <person name="Maupin R."/>
            <person name="Latreille P."/>
            <person name="Wendl M.C."/>
            <person name="Yang S.-P."/>
            <person name="Pohl C."/>
            <person name="Wallis J.W."/>
            <person name="Spieth J."/>
            <person name="Bieri T.A."/>
            <person name="Berkowicz N."/>
            <person name="Nelson J.O."/>
            <person name="Osborne J."/>
            <person name="Ding L."/>
            <person name="Meyer R."/>
            <person name="Sabo A."/>
            <person name="Shotland Y."/>
            <person name="Sinha P."/>
            <person name="Wohldmann P.E."/>
            <person name="Cook L.L."/>
            <person name="Hickenbotham M.T."/>
            <person name="Eldred J."/>
            <person name="Williams D."/>
            <person name="Jones T.A."/>
            <person name="She X."/>
            <person name="Ciccarelli F.D."/>
            <person name="Izaurralde E."/>
            <person name="Taylor J."/>
            <person name="Schmutz J."/>
            <person name="Myers R.M."/>
            <person name="Cox D.R."/>
            <person name="Huang X."/>
            <person name="McPherson J.D."/>
            <person name="Mardis E.R."/>
            <person name="Clifton S.W."/>
            <person name="Warren W.C."/>
            <person name="Chinwalla A.T."/>
            <person name="Eddy S.R."/>
            <person name="Marra M.A."/>
            <person name="Ovcharenko I."/>
            <person name="Furey T.S."/>
            <person name="Miller W."/>
            <person name="Eichler E.E."/>
            <person name="Bork P."/>
            <person name="Suyama M."/>
            <person name="Torrents D."/>
            <person name="Waterston R.H."/>
            <person name="Wilson R.K."/>
        </authorList>
    </citation>
    <scope>NUCLEOTIDE SEQUENCE [LARGE SCALE GENOMIC DNA]</scope>
</reference>
<reference key="9">
    <citation type="journal article" date="2004" name="Genome Res.">
        <title>The status, quality, and expansion of the NIH full-length cDNA project: the Mammalian Gene Collection (MGC).</title>
        <authorList>
            <consortium name="The MGC Project Team"/>
        </authorList>
    </citation>
    <scope>NUCLEOTIDE SEQUENCE [LARGE SCALE MRNA] (ISOFORM 1)</scope>
    <scope>VARIANTS ALA-13; SER-20 AND GLY-24</scope>
    <source>
        <tissue>Bone marrow</tissue>
        <tissue>Lung</tissue>
    </source>
</reference>
<reference key="10">
    <citation type="journal article" date="1986" name="Rev. Fr. Transfus. Immunohematol.">
        <title>Molecular biological study of the structure and expression of human glycophorin A.</title>
        <authorList>
            <person name="Siebert P.D."/>
            <person name="Fukuda M."/>
        </authorList>
    </citation>
    <scope>NUCLEOTIDE SEQUENCE [MRNA] OF 1-145 (ISOFORM 1)</scope>
    <scope>VARIANTS ALA-13; SER-20 AND GLY-24</scope>
</reference>
<reference key="11">
    <citation type="journal article" date="1975" name="Proc. Natl. Acad. Sci. U.S.A.">
        <title>Amino-acid sequence and oligosaccharide attachment sites of human erythrocyte glycophorin.</title>
        <authorList>
            <person name="Tomita M."/>
            <person name="Marchesi V.T."/>
        </authorList>
    </citation>
    <scope>PROTEIN SEQUENCE OF 20-150</scope>
    <scope>VARIANTS SER-20 AND GLY-24</scope>
</reference>
<reference key="12">
    <citation type="submission" date="1977-06" db="PIR data bank">
        <authorList>
            <person name="Furthmayr H."/>
            <person name="Galardy R."/>
            <person name="Tomita M."/>
            <person name="Marchesi V.T."/>
        </authorList>
    </citation>
    <scope>SEQUENCE REVISION TO 81-120</scope>
</reference>
<reference key="13">
    <citation type="journal article" date="1988" name="Eur. J. Biochem.">
        <title>Characterization of cDNA clones for human glycophorin A. Use for gene localization and for analysis of normal of glycophorin-A-deficient (Finnish type) genomic DNA.</title>
        <authorList>
            <person name="Rahuel C."/>
            <person name="London J."/>
            <person name="D'Auriol L."/>
            <person name="Mattei M.-G."/>
            <person name="Tournamille C."/>
            <person name="Skrzynia C."/>
            <person name="Lebouc Y."/>
            <person name="Galibert F."/>
            <person name="Cartron J.-P."/>
        </authorList>
    </citation>
    <scope>NUCLEOTIDE SEQUENCE [GENOMIC DNA] OF 23-150</scope>
    <scope>VARIANT GLY-24</scope>
</reference>
<reference key="14">
    <citation type="journal article" date="1981" name="Proc. Natl. Acad. Sci. U.S.A.">
        <title>Mg and Mc: mutations within the amino-terminal region of glycophorin A.</title>
        <authorList>
            <person name="Furthmayr H."/>
            <person name="Metaxas M.N."/>
            <person name="Metaxas-Buhler M."/>
        </authorList>
    </citation>
    <scope>PARTIAL PROTEIN SEQUENCE</scope>
</reference>
<reference key="15">
    <citation type="journal article" date="1981" name="Proc. Natl. Acad. Sci. U.S.A.">
        <title>Amino acid and carbohydrate structural variants of glycoprotein products (M-N glycoproteins) of the M-N allelic locus.</title>
        <authorList>
            <person name="Blumenfeld O.O."/>
            <person name="Adamany A.M."/>
            <person name="Puglia K.V."/>
        </authorList>
    </citation>
    <scope>PARTIAL PROTEIN SEQUENCE</scope>
    <scope>VARIANT ASN-23</scope>
</reference>
<reference key="16">
    <citation type="journal article" date="1969" name="J. Biol. Chem.">
        <title>Structural studies on human erythrocyte glycoproteins. Alkali-labile oligosaccharides.</title>
        <authorList>
            <person name="Thomas D.B."/>
            <person name="Winzler R.J."/>
        </authorList>
    </citation>
    <scope>GLYCOSYLATION</scope>
</reference>
<reference key="17">
    <citation type="journal article" date="1982" name="Nature">
        <title>Erythrocytes deficiency in glycophorin resist invasion by the malarial parasite Plasmodium falciparum.</title>
        <authorList>
            <person name="Pasvol G."/>
            <person name="Wainscoat J.S."/>
            <person name="Weatherall D.J."/>
        </authorList>
    </citation>
    <scope>POLYMORPHISM</scope>
    <scope>INVOLVEMENT IN RESISTANCE TO MALARIA</scope>
</reference>
<reference key="18">
    <citation type="journal article" date="1987" name="J. Biol. Chem.">
        <title>Structures of novel sialylated O-linked oligosaccharides isolated from human erythrocyte glycophorins.</title>
        <authorList>
            <person name="Fukuda M."/>
            <person name="Lauffenburger M."/>
            <person name="Sasaki H."/>
            <person name="Rogers M.E."/>
            <person name="Dell A."/>
        </authorList>
    </citation>
    <scope>GLYCOSYLATION</scope>
</reference>
<reference key="19">
    <citation type="journal article" date="1992" name="Biochemistry">
        <title>The glycophorin A transmembrane domain dimer: sequence-specific propensity for a right-handed supercoil of helices.</title>
        <authorList>
            <person name="Treutlein H.R."/>
            <person name="Lemmon M.A."/>
            <person name="Engelman D.M."/>
            <person name="Brunger A.T."/>
        </authorList>
    </citation>
    <scope>SUBUNIT</scope>
</reference>
<reference key="20">
    <citation type="journal article" date="1993" name="Glycobiology">
        <title>Glycosylation sites identified by solid-phase Edman degradation: O-linked glycosylation motifs on human glycophorin A.</title>
        <authorList>
            <person name="Pisano A."/>
            <person name="Redmond J.W."/>
            <person name="Williams K.L."/>
            <person name="Gooley A.A."/>
        </authorList>
    </citation>
    <scope>GLYCOSYLATION AT SER-21; THR-22; THR-23; THR-29; SER-30; THR-31; SER-32; THR-36; SER-38; SER-41; THR-44; ASN-45; THR-52; THR-56; SER-63; SER-66 AND THR-69</scope>
    <scope>PARTIAL PROTEIN SEQUENCE</scope>
</reference>
<reference key="21">
    <citation type="journal article" date="1994" name="Science">
        <title>Receptor and ligand domains for invasion of erythrocytes by Plasmodium falciparum.</title>
        <authorList>
            <person name="Sim B.K."/>
            <person name="Chitnis C.E."/>
            <person name="Wasniowska K."/>
            <person name="Hadley T.J."/>
            <person name="Miller L.H."/>
        </authorList>
    </citation>
    <scope>FUNCTION AS RECEPTOR FOR P.FALCIPARUM EBA-175</scope>
</reference>
<reference key="22">
    <citation type="journal article" date="2000" name="Arch. Immunol. Ther. Exp.">
        <title>Identification of blood group A and B antigens in human glycophorin.</title>
        <authorList>
            <person name="Podbielska M."/>
            <person name="Krotkiewski H."/>
        </authorList>
    </citation>
    <scope>GLYCOSYLATION (AB BLOOD GROUP ANTIGENS)</scope>
</reference>
<reference key="23">
    <citation type="journal article" date="2000" name="Biochem. J.">
        <title>Red-cell glycophorin A-band 3 interactions associated with the movement of band 3 to the cell surface.</title>
        <authorList>
            <person name="Young M.T."/>
            <person name="Beckmann R."/>
            <person name="Toye A.M."/>
            <person name="Tanner M.J."/>
        </authorList>
    </citation>
    <scope>FUNCTION</scope>
    <scope>MUTAGENESIS OF LEU-94; ILE-95; GLY-98 AND GLY-102</scope>
</reference>
<reference key="24">
    <citation type="journal article" date="2001" name="Blood">
        <title>Glycophorin A dimerization and band 3 interaction during erythroid membrane biogenesis: in vivo studies in human glycophorin A transgenic mice.</title>
        <authorList>
            <person name="Auffray I."/>
            <person name="Marfatia S."/>
            <person name="de Jong K."/>
            <person name="Lee G."/>
            <person name="Huang C.H."/>
            <person name="Paszty C."/>
            <person name="Tanner M.J."/>
            <person name="Mohandas N."/>
            <person name="Chasis J.A."/>
        </authorList>
    </citation>
    <scope>SUBUNIT</scope>
</reference>
<reference key="25">
    <citation type="journal article" date="2001" name="J. Biol. Chem.">
        <title>In vivo detection of hetero-association of glycophorin-A and its mutants within the membrane.</title>
        <authorList>
            <person name="Gerber D."/>
            <person name="Shai Y."/>
        </authorList>
    </citation>
    <scope>SUBCELLULAR LOCATION</scope>
</reference>
<reference key="26">
    <citation type="journal article" date="2003" name="J. Biol. Chem.">
        <title>Distinct regions of human glycophorin A enhance human red cell anion exchanger (band 3; AE1) transport function and surface trafficking.</title>
        <authorList>
            <person name="Young M.T."/>
            <person name="Tanner M.J."/>
        </authorList>
    </citation>
    <scope>FUNCTION</scope>
    <scope>MUTAGENESIS OF PHE-87; SER-88; PRO-90 AND GLU-91</scope>
</reference>
<reference key="27">
    <citation type="book" date="2004" name="The blood group antigen factsbook">
        <title>The blood group system.</title>
        <editorList>
            <person name="Reid M.E."/>
            <person name="Christine Lomas-Francis C."/>
        </editorList>
        <authorList>
            <person name="Reid M.E."/>
            <person name="Christine Lomas-Francis C."/>
        </authorList>
    </citation>
    <scope>REVIEW</scope>
    <scope>VARIANTS</scope>
</reference>
<reference key="28">
    <citation type="journal article" date="2004" name="Arch. Biochem. Biophys.">
        <title>ABH blood group antigens in O-glycans of human glycophorin A.</title>
        <authorList>
            <person name="Podbielska M."/>
            <person name="Fredriksson S.A."/>
            <person name="Nilsson B."/>
            <person name="Lisowska E."/>
            <person name="Krotkiewski H."/>
        </authorList>
    </citation>
    <scope>GLYCOSYLATION</scope>
    <scope>IDENTIFICATION BY MASS SPECTROMETRY</scope>
</reference>
<reference key="29">
    <citation type="journal article" date="2004" name="J. Biol. Chem.">
        <title>Altered structure and anion transport properties of band 3 (AE1, SLC4A1) in human red cells lacking glycophorin A.</title>
        <authorList>
            <person name="Bruce L.J."/>
            <person name="Pan R.J."/>
            <person name="Cope D.L."/>
            <person name="Uchikawa M."/>
            <person name="Gunn R.B."/>
            <person name="Cherry R.J."/>
            <person name="Tanner M.J."/>
        </authorList>
    </citation>
    <scope>FUNCTION</scope>
</reference>
<reference key="30">
    <citation type="journal article" date="2004" name="J. Virol.">
        <title>Capsid region involved in hepatitis A virus binding to glycophorin A of the erythrocyte membrane.</title>
        <authorList>
            <person name="Sanchez G."/>
            <person name="Aragones L."/>
            <person name="Costafreda M.I."/>
            <person name="Ribes E."/>
            <person name="Bosch A."/>
            <person name="Pinto R.M."/>
        </authorList>
    </citation>
    <scope>FUNCTION AS RECEPTOR FOR HEPATITIS A VIRUS</scope>
</reference>
<reference key="31">
    <citation type="journal article" date="2008" name="Microbiol. Immunol.">
        <title>Hsa, an adhesin of Streptococcus gordonii DL1, binds to alpha2-3-linked sialic acid on glycophorin A of the erythrocyte membrane.</title>
        <authorList>
            <person name="Yajima A."/>
            <person name="Urano-Tashiro Y."/>
            <person name="Shimazu K."/>
            <person name="Takashima E."/>
            <person name="Takahashi Y."/>
            <person name="Konishi K."/>
        </authorList>
    </citation>
    <scope>INTERACTION WITH STREPTOCOCCUS GORDONII HSA PROTEIN (MICROBIAL INFECTION)</scope>
</reference>
<reference key="32">
    <citation type="journal article" date="2009" name="Biochem. J.">
        <title>Interaction of anion exchanger 1 and glycophorin A in human erythroleukaemic K562 cells.</title>
        <authorList>
            <person name="Pang A.J."/>
            <person name="Reithmeier R.A."/>
        </authorList>
    </citation>
    <scope>FUNCTION</scope>
</reference>
<reference key="33">
    <citation type="journal article" date="2014" name="J. Proteomics">
        <title>An enzyme assisted RP-RPLC approach for in-depth analysis of human liver phosphoproteome.</title>
        <authorList>
            <person name="Bian Y."/>
            <person name="Song C."/>
            <person name="Cheng K."/>
            <person name="Dong M."/>
            <person name="Wang F."/>
            <person name="Huang J."/>
            <person name="Sun D."/>
            <person name="Wang L."/>
            <person name="Ye M."/>
            <person name="Zou H."/>
        </authorList>
    </citation>
    <scope>PHOSPHORYLATION [LARGE SCALE ANALYSIS] AT THR-133; SER-138 AND SER-148</scope>
    <scope>IDENTIFICATION BY MASS SPECTROMETRY [LARGE SCALE ANALYSIS]</scope>
    <source>
        <tissue>Liver</tissue>
    </source>
</reference>
<reference key="34">
    <citation type="journal article" date="2015" name="Blood">
        <title>Merozoite surface protein 1 recognition of host glycophorin A mediates malaria parasite invasion of red blood cells.</title>
        <authorList>
            <person name="Baldwin M.R."/>
            <person name="Li X."/>
            <person name="Hanada T."/>
            <person name="Liu S.C."/>
            <person name="Chishti A.H."/>
        </authorList>
    </citation>
    <scope>INTERACTION WITH P.FALCIPARUM MSP1 (MICROBIAL INFECTION)</scope>
</reference>
<reference key="35">
    <citation type="journal article" date="1990" name="J. Protein Chem.">
        <title>One- and two-dimensional NMR studies of the N-terminal portion of glycophorin A at 11.7 Tesla.</title>
        <authorList>
            <person name="Dill K."/>
            <person name="Hu S.H."/>
            <person name="Berman E."/>
            <person name="Pavia A.A."/>
            <person name="Lacombe J.M."/>
        </authorList>
    </citation>
    <scope>STRUCTURE BY NMR</scope>
</reference>
<reference key="36">
    <citation type="journal article" date="1997" name="Science">
        <title>A transmembrane helix dimer: structure and implications.</title>
        <authorList>
            <person name="Mackenzie K.R."/>
            <person name="Prestegard J.H."/>
            <person name="Engelman D.M."/>
        </authorList>
    </citation>
    <scope>STRUCTURE BY NMR OF 81-120</scope>
</reference>
<reference key="37">
    <citation type="journal article" date="1996" name="Proteins">
        <title>Improved prediction for the structure of the dimeric transmembrane domain of glycophorin A obtained through global searching.</title>
        <authorList>
            <person name="Adams P.D."/>
            <person name="Engelman D.M."/>
            <person name="Bruenger A.T."/>
        </authorList>
    </citation>
    <scope>3D-STRUCTURE MODELING OF 93-110</scope>
</reference>
<reference evidence="40 41 42 43 44 45 46 47 48 49 50" key="38">
    <citation type="journal article" date="2022" name="Nat. Struct. Mol. Biol.">
        <title>Architecture of the human erythrocyte ankyrin-1 complex.</title>
        <authorList>
            <person name="Vallese F."/>
            <person name="Kim K."/>
            <person name="Yen L.Y."/>
            <person name="Johnston J.D."/>
            <person name="Noble A.J."/>
            <person name="Cali T."/>
            <person name="Clarke O.B."/>
        </authorList>
    </citation>
    <scope>STRUCTURE BY ELECTRON MICROSCOPY (2.35 ANGSTROMS)</scope>
    <scope>FUNCTION</scope>
    <scope>SUBUNIT</scope>
    <scope>ANKYRIN-1 COMPLEX IDENTIFICATION</scope>
    <scope>INTERACTION WITH SLC4A1</scope>
</reference>
<reference key="39">
    <citation type="journal article" date="1992" name="Blood">
        <title>Molecular basis for the human erythrocyte glycophorin specifying the Miltenberger class I (MiI) phenotype.</title>
        <authorList>
            <person name="Huang C.-H."/>
            <person name="Spruell P."/>
            <person name="Moulds J.J."/>
            <person name="Blumenfeld O.O."/>
        </authorList>
    </citation>
    <scope>VARIANT ENEH/VW MET-47</scope>
</reference>
<reference key="40">
    <citation type="journal article" date="1992" name="Blood">
        <title>Molecular analysis of human glycophorin MiIX gene shows a silent segment transfer and untemplated mutation resulting from gene conversion via sequence repeats.</title>
        <authorList>
            <person name="Huang C.H."/>
            <person name="Skov F."/>
            <person name="Daniels G."/>
            <person name="Tippett P."/>
            <person name="Blumenfeld O.O."/>
        </authorList>
    </citation>
    <scope>VARIANT ENEH/HUT ANTIGEN LYS-47</scope>
</reference>
<reference key="41">
    <citation type="journal article" date="1993" name="J. Biol. Chem.">
        <title>Alteration of splice site selection by an exon mutation in the human glycophorin A gene.</title>
        <authorList>
            <person name="Huang C.H."/>
            <person name="Reid M."/>
            <person name="Daniels G."/>
            <person name="Blumenfeld O.O."/>
        </authorList>
    </citation>
    <scope>VARIANT ERIK ARG-78</scope>
</reference>
<reference key="42">
    <citation type="journal article" date="1999" name="Transfus. Med.">
        <title>Glycophorin A mutation Ala65 --&gt; Pro gives rise to a novel pair of MNS alleles ENEP (MNS39) and HAG (MNS41) and altered Wrb expression: direct evidence for GPA/band 3 interaction necessary for normal Wrb expression.</title>
        <authorList>
            <person name="Poole J."/>
            <person name="Banks J."/>
            <person name="Bruce L.J."/>
            <person name="Ring S.M."/>
            <person name="Levene C."/>
            <person name="Stern H."/>
            <person name="Overbeeke M.A."/>
            <person name="Tanner M.J."/>
        </authorList>
    </citation>
    <scope>VARIANT ENEP/HAG PRO-84</scope>
</reference>
<reference key="43">
    <citation type="journal article" date="2000" name="Transfusion">
        <title>The low-frequency MNS blood group antigens Ny(a) (MNS18) and Os(a) (MNS38) are associated with GPA amino acid substitutions.</title>
        <authorList>
            <person name="Daniels G.L."/>
            <person name="Bruce L.J."/>
            <person name="Mawby W.J."/>
            <person name="Green C.A."/>
            <person name="Petty A."/>
            <person name="Okubo Y."/>
            <person name="Kornstad L."/>
            <person name="Tanner M.J."/>
        </authorList>
    </citation>
    <scope>VARIANTS GLU-46 AND SER-73</scope>
</reference>
<reference key="44">
    <citation type="journal article" date="2000" name="Vox Sang.">
        <title>The MNS blood group antigens, Vr (MNS12) and Mt(a) (MNS14), each arise from an amino acid substitution on glycophorin A.</title>
        <authorList>
            <person name="Storry J.R."/>
            <person name="Coghlan G."/>
            <person name="Poole J."/>
            <person name="Figueroa D."/>
            <person name="Reid M.E."/>
        </authorList>
    </citation>
    <scope>VARIANTS TYR-66 AND ILE-77</scope>
</reference>
<name>GLPA_HUMAN</name>
<dbReference type="EMBL" id="M12857">
    <property type="protein sequence ID" value="AAA88044.1"/>
    <property type="molecule type" value="mRNA"/>
</dbReference>
<dbReference type="EMBL" id="X08054">
    <property type="protein sequence ID" value="CAA30843.1"/>
    <property type="molecule type" value="mRNA"/>
</dbReference>
<dbReference type="EMBL" id="M24128">
    <property type="protein sequence ID" value="AAA52768.1"/>
    <property type="molecule type" value="Genomic_DNA"/>
</dbReference>
<dbReference type="EMBL" id="M24123">
    <property type="protein sequence ID" value="AAA52768.1"/>
    <property type="status" value="JOINED"/>
    <property type="molecule type" value="Genomic_DNA"/>
</dbReference>
<dbReference type="EMBL" id="M24134">
    <property type="protein sequence ID" value="AAA52768.1"/>
    <property type="status" value="JOINED"/>
    <property type="molecule type" value="Genomic_DNA"/>
</dbReference>
<dbReference type="EMBL" id="M24124">
    <property type="protein sequence ID" value="AAA52768.1"/>
    <property type="status" value="JOINED"/>
    <property type="molecule type" value="Genomic_DNA"/>
</dbReference>
<dbReference type="EMBL" id="M24126">
    <property type="protein sequence ID" value="AAA52768.1"/>
    <property type="status" value="JOINED"/>
    <property type="molecule type" value="Genomic_DNA"/>
</dbReference>
<dbReference type="EMBL" id="M24127">
    <property type="protein sequence ID" value="AAA52768.1"/>
    <property type="status" value="JOINED"/>
    <property type="molecule type" value="Genomic_DNA"/>
</dbReference>
<dbReference type="EMBL" id="X51798">
    <property type="protein sequence ID" value="CAA36095.1"/>
    <property type="molecule type" value="mRNA"/>
</dbReference>
<dbReference type="EMBL" id="L31860">
    <property type="protein sequence ID" value="AAA88051.1"/>
    <property type="molecule type" value="mRNA"/>
</dbReference>
<dbReference type="EMBL" id="EU338231">
    <property type="protein sequence ID" value="ACA96789.1"/>
    <property type="molecule type" value="mRNA"/>
</dbReference>
<dbReference type="EMBL" id="EU338233">
    <property type="protein sequence ID" value="ACA96791.1"/>
    <property type="molecule type" value="mRNA"/>
</dbReference>
<dbReference type="EMBL" id="EU338234">
    <property type="protein sequence ID" value="ACA96792.1"/>
    <property type="molecule type" value="mRNA"/>
</dbReference>
<dbReference type="EMBL" id="GU347002">
    <property type="protein sequence ID" value="ADU25340.1"/>
    <property type="molecule type" value="mRNA"/>
</dbReference>
<dbReference type="EMBL" id="GU347003">
    <property type="protein sequence ID" value="ADU25341.1"/>
    <property type="molecule type" value="mRNA"/>
</dbReference>
<dbReference type="EMBL" id="AK290561">
    <property type="protein sequence ID" value="BAF83250.1"/>
    <property type="molecule type" value="mRNA"/>
</dbReference>
<dbReference type="EMBL" id="AC107223">
    <property type="status" value="NOT_ANNOTATED_CDS"/>
    <property type="molecule type" value="Genomic_DNA"/>
</dbReference>
<dbReference type="EMBL" id="BC005319">
    <property type="protein sequence ID" value="AAH05319.1"/>
    <property type="molecule type" value="mRNA"/>
</dbReference>
<dbReference type="EMBL" id="BC013328">
    <property type="protein sequence ID" value="AAH13328.1"/>
    <property type="molecule type" value="mRNA"/>
</dbReference>
<dbReference type="EMBL" id="M36281">
    <property type="protein sequence ID" value="AAA52624.1"/>
    <property type="status" value="ALT_INIT"/>
    <property type="molecule type" value="mRNA"/>
</dbReference>
<dbReference type="CCDS" id="CCDS34069.1">
    <molecule id="P02724-1"/>
</dbReference>
<dbReference type="CCDS" id="CCDS82959.1">
    <molecule id="P02724-3"/>
</dbReference>
<dbReference type="PIR" id="A33931">
    <property type="entry name" value="A25131"/>
</dbReference>
<dbReference type="RefSeq" id="NP_001295119.1">
    <molecule id="P02724-3"/>
    <property type="nucleotide sequence ID" value="NM_001308190.2"/>
</dbReference>
<dbReference type="RefSeq" id="NP_002090.4">
    <molecule id="P02724-1"/>
    <property type="nucleotide sequence ID" value="NM_002099.8"/>
</dbReference>
<dbReference type="RefSeq" id="XP_016863624.1">
    <molecule id="P02724-2"/>
    <property type="nucleotide sequence ID" value="XM_017008135.3"/>
</dbReference>
<dbReference type="RefSeq" id="XP_054205824.1">
    <molecule id="P02724-2"/>
    <property type="nucleotide sequence ID" value="XM_054349849.1"/>
</dbReference>
<dbReference type="PDB" id="1AFO">
    <property type="method" value="NMR"/>
    <property type="chains" value="A/B=81-120"/>
</dbReference>
<dbReference type="PDB" id="2KPE">
    <property type="method" value="NMR"/>
    <property type="chains" value="A/B=89-117"/>
</dbReference>
<dbReference type="PDB" id="2KPF">
    <property type="method" value="NMR"/>
    <property type="chains" value="A/B=80-117"/>
</dbReference>
<dbReference type="PDB" id="5EH4">
    <property type="method" value="X-ray"/>
    <property type="resolution" value="2.81 A"/>
    <property type="chains" value="A/B/C/D=89-117"/>
</dbReference>
<dbReference type="PDB" id="5EH6">
    <property type="method" value="X-ray"/>
    <property type="resolution" value="1.92 A"/>
    <property type="chains" value="A=89-117"/>
</dbReference>
<dbReference type="PDB" id="7UZ3">
    <property type="method" value="EM"/>
    <property type="resolution" value="2.35 A"/>
    <property type="chains" value="B/D=1-150"/>
</dbReference>
<dbReference type="PDB" id="7V07">
    <property type="method" value="EM"/>
    <property type="resolution" value="2.80 A"/>
    <property type="chains" value="B/D=1-150"/>
</dbReference>
<dbReference type="PDB" id="7V0K">
    <property type="method" value="EM"/>
    <property type="resolution" value="2.40 A"/>
    <property type="chains" value="D/N=1-150"/>
</dbReference>
<dbReference type="PDB" id="7V19">
    <property type="method" value="EM"/>
    <property type="resolution" value="3.30 A"/>
    <property type="chains" value="B/D=1-150"/>
</dbReference>
<dbReference type="PDB" id="8CRQ">
    <property type="method" value="EM"/>
    <property type="resolution" value="3.20 A"/>
    <property type="chains" value="B/D=1-150"/>
</dbReference>
<dbReference type="PDB" id="8CRR">
    <property type="method" value="EM"/>
    <property type="resolution" value="3.00 A"/>
    <property type="chains" value="B/D=1-150"/>
</dbReference>
<dbReference type="PDB" id="8CRT">
    <property type="method" value="EM"/>
    <property type="resolution" value="3.00 A"/>
    <property type="chains" value="B/D=1-150"/>
</dbReference>
<dbReference type="PDB" id="8CS9">
    <property type="method" value="EM"/>
    <property type="resolution" value="2.74 A"/>
    <property type="chains" value="R/S/T/a/b/c=1-150"/>
</dbReference>
<dbReference type="PDB" id="8CSL">
    <property type="method" value="EM"/>
    <property type="resolution" value="25.00 A"/>
    <property type="chains" value="R/S/T/a/b/c=1-150"/>
</dbReference>
<dbReference type="PDB" id="8CT3">
    <property type="method" value="EM"/>
    <property type="resolution" value="3.30 A"/>
    <property type="chains" value="B/D=1-150"/>
</dbReference>
<dbReference type="PDB" id="8CTE">
    <property type="method" value="EM"/>
    <property type="resolution" value="2.90 A"/>
    <property type="chains" value="D/N=1-150"/>
</dbReference>
<dbReference type="PDBsum" id="1AFO"/>
<dbReference type="PDBsum" id="2KPE"/>
<dbReference type="PDBsum" id="2KPF"/>
<dbReference type="PDBsum" id="5EH4"/>
<dbReference type="PDBsum" id="5EH6"/>
<dbReference type="PDBsum" id="7UZ3"/>
<dbReference type="PDBsum" id="7V07"/>
<dbReference type="PDBsum" id="7V0K"/>
<dbReference type="PDBsum" id="7V19"/>
<dbReference type="PDBsum" id="8CRQ"/>
<dbReference type="PDBsum" id="8CRR"/>
<dbReference type="PDBsum" id="8CRT"/>
<dbReference type="PDBsum" id="8CS9"/>
<dbReference type="PDBsum" id="8CSL"/>
<dbReference type="PDBsum" id="8CT3"/>
<dbReference type="PDBsum" id="8CTE"/>
<dbReference type="BMRB" id="P02724"/>
<dbReference type="EMDB" id="EMD-26874"/>
<dbReference type="EMDB" id="EMD-26940"/>
<dbReference type="EMDB" id="EMD-26943"/>
<dbReference type="EMDB" id="EMD-26954"/>
<dbReference type="EMDB" id="EMD-26955"/>
<dbReference type="EMDB" id="EMD-26956"/>
<dbReference type="EMDB" id="EMD-26958"/>
<dbReference type="EMDB" id="EMD-26960"/>
<dbReference type="EMDB" id="EMD-26965"/>
<dbReference type="EMDB" id="EMD-26979"/>
<dbReference type="EMDB" id="EMD-26988"/>
<dbReference type="SMR" id="P02724"/>
<dbReference type="BioGRID" id="109248">
    <property type="interactions" value="185"/>
</dbReference>
<dbReference type="FunCoup" id="P02724">
    <property type="interactions" value="120"/>
</dbReference>
<dbReference type="IntAct" id="P02724">
    <property type="interactions" value="182"/>
</dbReference>
<dbReference type="STRING" id="9606.ENSP00000354003"/>
<dbReference type="BindingDB" id="P02724"/>
<dbReference type="ChEMBL" id="CHEMBL5806"/>
<dbReference type="TCDB" id="8.A.168.1.1">
    <property type="family name" value="the glycophorin (gph) family"/>
</dbReference>
<dbReference type="GlyConnect" id="187">
    <property type="glycosylation" value="2 N-Linked glycans, 14 O-Linked glycans (1 site)"/>
</dbReference>
<dbReference type="GlyConnect" id="188">
    <property type="glycosylation" value="4 O-Linked glycans"/>
</dbReference>
<dbReference type="GlyConnect" id="189">
    <property type="glycosylation" value="7 O-Linked glycans (1 site)"/>
</dbReference>
<dbReference type="GlyCosmos" id="P02724">
    <property type="glycosylation" value="18 sites, 29 glycans"/>
</dbReference>
<dbReference type="GlyGen" id="P02724">
    <property type="glycosylation" value="20 sites, 4 N-linked glycans (1 site), 24 O-linked glycans (18 sites)"/>
</dbReference>
<dbReference type="iPTMnet" id="P02724"/>
<dbReference type="PhosphoSitePlus" id="P02724"/>
<dbReference type="BioMuta" id="GYPA"/>
<dbReference type="DMDM" id="259016238"/>
<dbReference type="jPOST" id="P02724"/>
<dbReference type="MassIVE" id="P02724"/>
<dbReference type="PaxDb" id="9606-ENSP00000354003"/>
<dbReference type="PeptideAtlas" id="P02724"/>
<dbReference type="ProteomicsDB" id="51556">
    <molecule id="P02724-1"/>
</dbReference>
<dbReference type="ProteomicsDB" id="7281"/>
<dbReference type="ProteomicsDB" id="7282"/>
<dbReference type="Pumba" id="P02724"/>
<dbReference type="ABCD" id="P02724">
    <property type="antibodies" value="17 sequenced antibodies"/>
</dbReference>
<dbReference type="Antibodypedia" id="3054">
    <property type="antibodies" value="2179 antibodies from 47 providers"/>
</dbReference>
<dbReference type="DNASU" id="2993"/>
<dbReference type="Ensembl" id="ENST00000324022.14">
    <molecule id="P02724-3"/>
    <property type="protein sequence ID" value="ENSP00000324483.10"/>
    <property type="gene ID" value="ENSG00000170180.22"/>
</dbReference>
<dbReference type="Ensembl" id="ENST00000360771.8">
    <molecule id="P02724-1"/>
    <property type="protein sequence ID" value="ENSP00000354003.4"/>
    <property type="gene ID" value="ENSG00000170180.22"/>
</dbReference>
<dbReference type="Ensembl" id="ENST00000641688.3">
    <molecule id="P02724-1"/>
    <property type="protein sequence ID" value="ENSP00000493142.2"/>
    <property type="gene ID" value="ENSG00000170180.22"/>
</dbReference>
<dbReference type="Ensembl" id="ENST00000642713.1">
    <molecule id="P02724-2"/>
    <property type="protein sequence ID" value="ENSP00000494092.1"/>
    <property type="gene ID" value="ENSG00000170180.22"/>
</dbReference>
<dbReference type="Ensembl" id="ENST00000646447.1">
    <molecule id="P02724-2"/>
    <property type="protein sequence ID" value="ENSP00000495922.1"/>
    <property type="gene ID" value="ENSG00000170180.22"/>
</dbReference>
<dbReference type="GeneID" id="2993"/>
<dbReference type="KEGG" id="hsa:2993"/>
<dbReference type="MANE-Select" id="ENST00000641688.3">
    <property type="protein sequence ID" value="ENSP00000493142.2"/>
    <property type="RefSeq nucleotide sequence ID" value="NM_002099.8"/>
    <property type="RefSeq protein sequence ID" value="NP_002090.4"/>
</dbReference>
<dbReference type="UCSC" id="uc003ijo.5">
    <molecule id="P02724-1"/>
    <property type="organism name" value="human"/>
</dbReference>
<dbReference type="AGR" id="HGNC:4702"/>
<dbReference type="CTD" id="2993"/>
<dbReference type="DisGeNET" id="2993"/>
<dbReference type="GeneCards" id="GYPA"/>
<dbReference type="HGNC" id="HGNC:4702">
    <property type="gene designation" value="GYPA"/>
</dbReference>
<dbReference type="HPA" id="ENSG00000170180">
    <property type="expression patterns" value="Tissue enriched (bone)"/>
</dbReference>
<dbReference type="MalaCards" id="GYPA"/>
<dbReference type="MIM" id="111300">
    <property type="type" value="phenotype"/>
</dbReference>
<dbReference type="MIM" id="611162">
    <property type="type" value="phenotype"/>
</dbReference>
<dbReference type="MIM" id="617922">
    <property type="type" value="gene"/>
</dbReference>
<dbReference type="neXtProt" id="NX_P02724"/>
<dbReference type="OpenTargets" id="ENSG00000170180"/>
<dbReference type="PharmGKB" id="PA29080"/>
<dbReference type="VEuPathDB" id="HostDB:ENSG00000170180"/>
<dbReference type="eggNOG" id="ENOG502THAT">
    <property type="taxonomic scope" value="Eukaryota"/>
</dbReference>
<dbReference type="GeneTree" id="ENSGT00550000075214"/>
<dbReference type="HOGENOM" id="CLU_154690_2_1_1"/>
<dbReference type="InParanoid" id="P02724"/>
<dbReference type="OMA" id="DKHKQSM"/>
<dbReference type="OrthoDB" id="9485927at2759"/>
<dbReference type="PAN-GO" id="P02724">
    <property type="GO annotations" value="1 GO annotation based on evolutionary models"/>
</dbReference>
<dbReference type="PhylomeDB" id="P02724"/>
<dbReference type="TreeFam" id="TF338555"/>
<dbReference type="PathwayCommons" id="P02724"/>
<dbReference type="Reactome" id="R-HSA-202733">
    <property type="pathway name" value="Cell surface interactions at the vascular wall"/>
</dbReference>
<dbReference type="SignaLink" id="P02724"/>
<dbReference type="SIGNOR" id="P02724"/>
<dbReference type="BioGRID-ORCS" id="2993">
    <property type="hits" value="11 hits in 1142 CRISPR screens"/>
</dbReference>
<dbReference type="ChiTaRS" id="GYPA">
    <property type="organism name" value="human"/>
</dbReference>
<dbReference type="EvolutionaryTrace" id="P02724"/>
<dbReference type="GeneWiki" id="GYPA"/>
<dbReference type="GenomeRNAi" id="2993"/>
<dbReference type="Pharos" id="P02724">
    <property type="development level" value="Tbio"/>
</dbReference>
<dbReference type="PRO" id="PR:P02724"/>
<dbReference type="Proteomes" id="UP000005640">
    <property type="component" value="Chromosome 4"/>
</dbReference>
<dbReference type="RNAct" id="P02724">
    <property type="molecule type" value="protein"/>
</dbReference>
<dbReference type="Bgee" id="ENSG00000170180">
    <property type="expression patterns" value="Expressed in trabecular bone tissue and 111 other cell types or tissues"/>
</dbReference>
<dbReference type="ExpressionAtlas" id="P02724">
    <property type="expression patterns" value="baseline and differential"/>
</dbReference>
<dbReference type="GO" id="GO:0170014">
    <property type="term" value="C:ankyrin-1 complex"/>
    <property type="evidence" value="ECO:0000314"/>
    <property type="project" value="UniProtKB"/>
</dbReference>
<dbReference type="GO" id="GO:0005829">
    <property type="term" value="C:cytosol"/>
    <property type="evidence" value="ECO:0000314"/>
    <property type="project" value="HPA"/>
</dbReference>
<dbReference type="GO" id="GO:0016020">
    <property type="term" value="C:membrane"/>
    <property type="evidence" value="ECO:0000304"/>
    <property type="project" value="ProtInc"/>
</dbReference>
<dbReference type="GO" id="GO:0005654">
    <property type="term" value="C:nucleoplasm"/>
    <property type="evidence" value="ECO:0000314"/>
    <property type="project" value="HPA"/>
</dbReference>
<dbReference type="GO" id="GO:0005886">
    <property type="term" value="C:plasma membrane"/>
    <property type="evidence" value="ECO:0000314"/>
    <property type="project" value="HPA"/>
</dbReference>
<dbReference type="GO" id="GO:0042802">
    <property type="term" value="F:identical protein binding"/>
    <property type="evidence" value="ECO:0000353"/>
    <property type="project" value="IntAct"/>
</dbReference>
<dbReference type="GO" id="GO:0001618">
    <property type="term" value="F:virus receptor activity"/>
    <property type="evidence" value="ECO:0007669"/>
    <property type="project" value="UniProtKB-KW"/>
</dbReference>
<dbReference type="FunFam" id="1.20.5.70:FF:000001">
    <property type="entry name" value="Glycophorin B"/>
    <property type="match status" value="1"/>
</dbReference>
<dbReference type="Gene3D" id="1.20.5.70">
    <property type="match status" value="1"/>
</dbReference>
<dbReference type="InterPro" id="IPR001195">
    <property type="entry name" value="Glycophorin"/>
</dbReference>
<dbReference type="InterPro" id="IPR018938">
    <property type="entry name" value="Glycophorin_CS"/>
</dbReference>
<dbReference type="InterPro" id="IPR049535">
    <property type="entry name" value="GYPA_B"/>
</dbReference>
<dbReference type="PANTHER" id="PTHR13813">
    <property type="entry name" value="GLYCOPHORIN"/>
    <property type="match status" value="1"/>
</dbReference>
<dbReference type="PANTHER" id="PTHR13813:SF3">
    <property type="entry name" value="GLYCOPHORIN-A"/>
    <property type="match status" value="1"/>
</dbReference>
<dbReference type="Pfam" id="PF01102">
    <property type="entry name" value="Glycophorin_A"/>
    <property type="match status" value="1"/>
</dbReference>
<dbReference type="PIRSF" id="PIRSF002466">
    <property type="entry name" value="Glycophorin"/>
    <property type="match status" value="1"/>
</dbReference>
<dbReference type="PROSITE" id="PS00312">
    <property type="entry name" value="GLYCOPHORIN_A"/>
    <property type="match status" value="1"/>
</dbReference>
<feature type="signal peptide" evidence="3">
    <location>
        <begin position="1"/>
        <end position="19"/>
    </location>
</feature>
<feature type="chain" id="PRO_0000012134" description="Glycophorin-A">
    <location>
        <begin position="20"/>
        <end position="150"/>
    </location>
</feature>
<feature type="topological domain" description="Extracellular">
    <location>
        <begin position="20"/>
        <end position="91"/>
    </location>
</feature>
<feature type="transmembrane region" description="Helical">
    <location>
        <begin position="92"/>
        <end position="114"/>
    </location>
</feature>
<feature type="topological domain" description="Cytoplasmic">
    <location>
        <begin position="115"/>
        <end position="150"/>
    </location>
</feature>
<feature type="region of interest" description="Disordered" evidence="1">
    <location>
        <begin position="121"/>
        <end position="150"/>
    </location>
</feature>
<feature type="modified residue" description="Phosphothreonine" evidence="51">
    <location>
        <position position="133"/>
    </location>
</feature>
<feature type="modified residue" description="Phosphoserine" evidence="51">
    <location>
        <position position="138"/>
    </location>
</feature>
<feature type="modified residue" description="Phosphoserine" evidence="51">
    <location>
        <position position="148"/>
    </location>
</feature>
<feature type="glycosylation site" description="O-linked (GalNAc...) serine" evidence="3 36">
    <location>
        <position position="21"/>
    </location>
</feature>
<feature type="glycosylation site" description="O-linked (GalNAc...) threonine" evidence="3 36">
    <location>
        <position position="22"/>
    </location>
</feature>
<feature type="glycosylation site" description="O-linked (GalNAc...) threonine" evidence="3 36">
    <location>
        <position position="23"/>
    </location>
</feature>
<feature type="glycosylation site" description="O-linked (GalNAc...) threonine" evidence="3 36">
    <location>
        <position position="29"/>
    </location>
</feature>
<feature type="glycosylation site" description="O-linked (GalNAc...) serine" evidence="3 36">
    <location>
        <position position="30"/>
    </location>
</feature>
<feature type="glycosylation site" description="O-linked (GalNAc...) threonine" evidence="3 36">
    <location>
        <position position="31"/>
    </location>
</feature>
<feature type="glycosylation site" description="O-linked (GalNAc...) serine" evidence="3 36">
    <location>
        <position position="32"/>
    </location>
</feature>
<feature type="glycosylation site" description="O-linked (GalNAc...) threonine" evidence="36">
    <location>
        <position position="36"/>
    </location>
</feature>
<feature type="glycosylation site" description="O-linked (GalNAc...) serine" evidence="36">
    <location>
        <position position="38"/>
    </location>
</feature>
<feature type="glycosylation site" description="O-linked (GalNAc...) serine" evidence="3 36">
    <location>
        <position position="41"/>
    </location>
</feature>
<feature type="glycosylation site" description="O-linked (GalNAc...) threonine" evidence="3 36">
    <location>
        <position position="44"/>
    </location>
</feature>
<feature type="glycosylation site" description="N-linked (GlcNAc...) asparagine" evidence="3 36">
    <location>
        <position position="45"/>
    </location>
</feature>
<feature type="glycosylation site" description="O-linked (GalNAc...) threonine" evidence="36">
    <location>
        <position position="52"/>
    </location>
</feature>
<feature type="glycosylation site" description="O-linked (GalNAc...) threonine" evidence="3 36">
    <location>
        <position position="56"/>
    </location>
</feature>
<feature type="glycosylation site" description="O-linked (GalNAc...) serine" evidence="3 36">
    <location>
        <position position="63"/>
    </location>
</feature>
<feature type="glycosylation site" description="O-linked (GalNAc...) serine" evidence="3 36">
    <location>
        <position position="66"/>
    </location>
</feature>
<feature type="glycosylation site" description="O-linked (GalNAc...) threonine" evidence="3 36">
    <location>
        <position position="69"/>
    </location>
</feature>
<feature type="splice variant" id="VSP_047822" description="In isoform 2." evidence="37">
    <location>
        <begin position="1"/>
        <end position="26"/>
    </location>
</feature>
<feature type="splice variant" id="VSP_047823" description="In isoform 3." evidence="38">
    <location>
        <begin position="13"/>
        <end position="45"/>
    </location>
</feature>
<feature type="sequence variant" id="VAR_058911" description="In dbSNP:rs4449373." evidence="14 17 22 24 26 29 33">
    <original>E</original>
    <variation>A</variation>
    <location>
        <position position="13"/>
    </location>
</feature>
<feature type="sequence variant" id="VAR_059977" description="In dbSNP:rs4449373.">
    <original>E</original>
    <variation>G</variation>
    <location>
        <position position="13"/>
    </location>
</feature>
<feature type="sequence variant" id="VAR_003190" description="In M antigen; dbSNP:rs7682260." evidence="17 18 25">
    <original>L</original>
    <variation>S</variation>
    <location>
        <position position="20"/>
    </location>
</feature>
<feature type="sequence variant" id="VAR_058912" description="In M(g) antigen." evidence="32">
    <original>T</original>
    <variation>N</variation>
    <location>
        <position position="23"/>
    </location>
</feature>
<feature type="sequence variant" id="VAR_058913" description="In dbSNP:rs7658293.">
    <original>E</original>
    <variation>D</variation>
    <location>
        <position position="24"/>
    </location>
</feature>
<feature type="sequence variant" id="VAR_003191" description="In M antigen; dbSNP:rs7687256." evidence="17 18 25 31">
    <original>E</original>
    <variation>G</variation>
    <location>
        <position position="24"/>
    </location>
</feature>
<feature type="sequence variant" id="VAR_058914" description="In Ny(a) antigen." evidence="5">
    <original>D</original>
    <variation>E</variation>
    <location>
        <position position="46"/>
    </location>
</feature>
<feature type="sequence variant" id="VAR_058915" description="In ENEH/Hut antigen." evidence="11">
    <original>T</original>
    <variation>K</variation>
    <location>
        <position position="47"/>
    </location>
</feature>
<feature type="sequence variant" id="VAR_058916" description="In ENEH/Vw antigen." evidence="19">
    <original>T</original>
    <variation>M</variation>
    <location>
        <position position="47"/>
    </location>
</feature>
<feature type="sequence variant" id="VAR_058917" description="In Or antigen.">
    <original>R</original>
    <variation>W</variation>
    <location>
        <position position="50"/>
    </location>
</feature>
<feature type="sequence variant" id="VAR_058918" description="In Vr antigen; dbSNP:rs56077914." evidence="4">
    <original>S</original>
    <variation>Y</variation>
    <location>
        <position position="66"/>
    </location>
</feature>
<feature type="sequence variant" id="VAR_058919" description="In Os(a) antigen." evidence="5">
    <original>P</original>
    <variation>S</variation>
    <location>
        <position position="73"/>
    </location>
</feature>
<feature type="sequence variant" id="VAR_058920" description="In Ri(a) antigen.">
    <original>E</original>
    <variation>K</variation>
    <location>
        <position position="76"/>
    </location>
</feature>
<feature type="sequence variant" id="VAR_058921" description="In Mt(a) antigen; dbSNP:rs56172553." evidence="4">
    <original>T</original>
    <variation>I</variation>
    <location>
        <position position="77"/>
    </location>
</feature>
<feature type="sequence variant" id="VAR_058922" description="In ERIK antigen; dbSNP:rs1800582." evidence="35">
    <original>G</original>
    <variation>R</variation>
    <location>
        <position position="78"/>
    </location>
</feature>
<feature type="sequence variant" id="VAR_058923" description="In ENAV/MARS antigen.">
    <original>Q</original>
    <variation>K</variation>
    <location>
        <position position="82"/>
    </location>
</feature>
<feature type="sequence variant" id="VAR_058924" description="In ENEP/HAG antigen." evidence="2">
    <original>A</original>
    <variation>P</variation>
    <location>
        <position position="84"/>
    </location>
</feature>
<feature type="mutagenesis site" description="Diminishes dimerization." evidence="10">
    <original>F</original>
    <variation>C</variation>
    <location>
        <position position="87"/>
    </location>
</feature>
<feature type="mutagenesis site" description="Diminishes dimerization." evidence="10">
    <original>S</original>
    <variation>C</variation>
    <location>
        <position position="88"/>
    </location>
</feature>
<feature type="mutagenesis site" description="Diminishes dimerization." evidence="10">
    <original>P</original>
    <variation>C</variation>
    <location>
        <position position="90"/>
    </location>
</feature>
<feature type="mutagenesis site" description="Diminishes dimerization." evidence="10">
    <original>E</original>
    <variation>C</variation>
    <location>
        <position position="91"/>
    </location>
</feature>
<feature type="mutagenesis site" description="Diminishes dimerization." evidence="7">
    <original>L</original>
    <variation>I</variation>
    <location>
        <position position="94"/>
    </location>
</feature>
<feature type="mutagenesis site" description="Diminishes dimerization." evidence="7">
    <original>I</original>
    <variation>A</variation>
    <location>
        <position position="95"/>
    </location>
</feature>
<feature type="mutagenesis site" description="Diminishes dimerization." evidence="7">
    <original>G</original>
    <variation>L</variation>
    <location>
        <position position="98"/>
    </location>
</feature>
<feature type="mutagenesis site" description="Abolishes dimerization." evidence="7">
    <original>G</original>
    <variation>L</variation>
    <location>
        <position position="102"/>
    </location>
</feature>
<feature type="sequence conflict" description="In Ref. 11; AA sequence." evidence="38" ref="11">
    <original>S</original>
    <variation>T</variation>
    <location>
        <position position="30"/>
    </location>
</feature>
<feature type="sequence conflict" description="In Ref. 11; AA sequence." evidence="38" ref="11">
    <original>T</original>
    <variation>S</variation>
    <location>
        <position position="36"/>
    </location>
</feature>
<feature type="sequence conflict" description="In Ref. 1; AAA88044." evidence="38" ref="1">
    <original>T</original>
    <variation>R</variation>
    <location>
        <position position="133"/>
    </location>
</feature>
<feature type="strand" evidence="52">
    <location>
        <begin position="84"/>
        <end position="86"/>
    </location>
</feature>
<feature type="helix" evidence="53">
    <location>
        <begin position="92"/>
        <end position="115"/>
    </location>
</feature>
<comment type="function">
    <text evidence="7 10 12 21 27">Component of the ankyrin-1 complex, a multiprotein complex involved in the stability and shape of the erythrocyte membrane (PubMed:35835865). Glycophorin A is the major intrinsic membrane protein of the erythrocyte. The N-terminal glycosylated segment, which lies outside the erythrocyte membrane, has MN blood group receptors. Appears to be important for the function of SLC4A1 and is required for high activity of SLC4A1. May be involved in translocation of SLC4A1 to the plasma membrane.</text>
</comment>
<comment type="function">
    <text evidence="16">(Microbial infection) Appears to be a receptor for Hepatitis A virus (HAV).</text>
</comment>
<comment type="function">
    <text evidence="34">(Microbial infection) Receptor for P.falciparum erythrocyte-binding antigen 175 (EBA-175); binding of EBA-175 is dependent on sialic acid residues of the O-linked glycans.</text>
</comment>
<comment type="subunit">
    <text evidence="8 13 27">Homodimer (PubMed:11313283, PubMed:1463744, PubMed:35835865). Component of the ankyrin-1 complex in the erythrocyte, composed of ANK1, RHCE, RHAG, SLC4A1, EPB42, GYPA, GYPB and AQP1 (PubMed:35835865). Interacts with SLC4A1; a GYPA monomer is bound at each end of the SLC4A1 dimer forming a heterotetramer (PubMed:35835865).</text>
</comment>
<comment type="subunit">
    <text evidence="20">(Microbial infection) Interacts with Streptococcus gordonii hsa protein.</text>
</comment>
<comment type="subunit">
    <text evidence="23">(Microbial infection) Interacts (in a sialic acid-independent manner) with P.falciparum MSP1 subunit p83.</text>
</comment>
<comment type="interaction">
    <interactant intactId="EBI-702665">
        <id>P02724</id>
    </interactant>
    <interactant intactId="EBI-17439331">
        <id>Q8N6D5</id>
        <label>ANKRD29</label>
    </interactant>
    <organismsDiffer>false</organismsDiffer>
    <experiments>3</experiments>
</comment>
<comment type="interaction">
    <interactant intactId="EBI-702665">
        <id>P02724</id>
    </interactant>
    <interactant intactId="EBI-18400628">
        <id>O00501</id>
        <label>CLDN5</label>
    </interactant>
    <organismsDiffer>false</organismsDiffer>
    <experiments>3</experiments>
</comment>
<comment type="interaction">
    <interactant intactId="EBI-702665">
        <id>P02724</id>
    </interactant>
    <interactant intactId="EBI-3915253">
        <id>Q15125</id>
        <label>EBP</label>
    </interactant>
    <organismsDiffer>false</organismsDiffer>
    <experiments>3</experiments>
</comment>
<comment type="interaction">
    <interactant intactId="EBI-702665">
        <id>P02724</id>
    </interactant>
    <interactant intactId="EBI-18535450">
        <id>Q9GZR5</id>
        <label>ELOVL4</label>
    </interactant>
    <organismsDiffer>false</organismsDiffer>
    <experiments>3</experiments>
</comment>
<comment type="interaction">
    <interactant intactId="EBI-702665">
        <id>P02724</id>
    </interactant>
    <interactant intactId="EBI-781551">
        <id>Q9Y282</id>
        <label>ERGIC3</label>
    </interactant>
    <organismsDiffer>false</organismsDiffer>
    <experiments>3</experiments>
</comment>
<comment type="interaction">
    <interactant intactId="EBI-702665">
        <id>P02724</id>
    </interactant>
    <interactant intactId="EBI-715362">
        <id>Q9H8M9</id>
        <label>EVA1A</label>
    </interactant>
    <organismsDiffer>false</organismsDiffer>
    <experiments>3</experiments>
</comment>
<comment type="interaction">
    <interactant intactId="EBI-702665">
        <id>P02724</id>
    </interactant>
    <interactant intactId="EBI-18304435">
        <id>Q5JX71</id>
        <label>FAM209A</label>
    </interactant>
    <organismsDiffer>false</organismsDiffer>
    <experiments>3</experiments>
</comment>
<comment type="interaction">
    <interactant intactId="EBI-702665">
        <id>P02724</id>
    </interactant>
    <interactant intactId="EBI-2833872">
        <id>O15552</id>
        <label>FFAR2</label>
    </interactant>
    <organismsDiffer>false</organismsDiffer>
    <experiments>3</experiments>
</comment>
<comment type="interaction">
    <interactant intactId="EBI-702665">
        <id>P02724</id>
    </interactant>
    <interactant intactId="EBI-17231387">
        <id>Q6ZVE7</id>
        <label>GOLT1A</label>
    </interactant>
    <organismsDiffer>false</organismsDiffer>
    <experiments>3</experiments>
</comment>
<comment type="interaction">
    <interactant intactId="EBI-702665">
        <id>P02724</id>
    </interactant>
    <interactant intactId="EBI-13067820">
        <id>Q9NZD1</id>
        <label>GPRC5D</label>
    </interactant>
    <organismsDiffer>false</organismsDiffer>
    <experiments>3</experiments>
</comment>
<comment type="interaction">
    <interactant intactId="EBI-702665">
        <id>P02724</id>
    </interactant>
    <interactant intactId="EBI-11721746">
        <id>Q8TED1</id>
        <label>GPX8</label>
    </interactant>
    <organismsDiffer>false</organismsDiffer>
    <experiments>3</experiments>
</comment>
<comment type="interaction">
    <interactant intactId="EBI-702665">
        <id>P02724</id>
    </interactant>
    <interactant intactId="EBI-702665">
        <id>P02724</id>
        <label>GYPA</label>
    </interactant>
    <organismsDiffer>false</organismsDiffer>
    <experiments>4</experiments>
</comment>
<comment type="interaction">
    <interactant intactId="EBI-702665">
        <id>P02724</id>
    </interactant>
    <interactant intactId="EBI-1031656">
        <id>Q13651</id>
        <label>IL10RA</label>
    </interactant>
    <organismsDiffer>false</organismsDiffer>
    <experiments>3</experiments>
</comment>
<comment type="interaction">
    <interactant intactId="EBI-702665">
        <id>P02724</id>
    </interactant>
    <interactant intactId="EBI-751001">
        <id>Q14145</id>
        <label>KEAP1</label>
    </interactant>
    <organismsDiffer>false</organismsDiffer>
    <experiments>4</experiments>
</comment>
<comment type="interaction">
    <interactant intactId="EBI-702665">
        <id>P02724</id>
    </interactant>
    <interactant intactId="EBI-2865663">
        <id>Q13571</id>
        <label>LAPTM5</label>
    </interactant>
    <organismsDiffer>false</organismsDiffer>
    <experiments>3</experiments>
</comment>
<comment type="interaction">
    <interactant intactId="EBI-702665">
        <id>P02724</id>
    </interactant>
    <interactant intactId="EBI-716063">
        <id>Q13113</id>
        <label>PDZK1IP1</label>
    </interactant>
    <organismsDiffer>false</organismsDiffer>
    <experiments>3</experiments>
</comment>
<comment type="interaction">
    <interactant intactId="EBI-702665">
        <id>P02724</id>
    </interactant>
    <interactant intactId="EBI-3920694">
        <id>Q9NR31</id>
        <label>SAR1A</label>
    </interactant>
    <organismsDiffer>false</organismsDiffer>
    <experiments>3</experiments>
</comment>
<comment type="interaction">
    <interactant intactId="EBI-702665">
        <id>P02724</id>
    </interactant>
    <interactant intactId="EBI-347996">
        <id>O43765</id>
        <label>SGTA</label>
    </interactant>
    <organismsDiffer>false</organismsDiffer>
    <experiments>3</experiments>
</comment>
<comment type="interaction">
    <interactant intactId="EBI-702665">
        <id>P02724</id>
    </interactant>
    <interactant intactId="EBI-744081">
        <id>Q96EQ0</id>
        <label>SGTB</label>
    </interactant>
    <organismsDiffer>false</organismsDiffer>
    <experiments>3</experiments>
</comment>
<comment type="interaction">
    <interactant intactId="EBI-702665">
        <id>P02724</id>
    </interactant>
    <interactant intactId="EBI-18159983">
        <id>Q3KNW5</id>
        <label>SLC10A6</label>
    </interactant>
    <organismsDiffer>false</organismsDiffer>
    <experiments>3</experiments>
</comment>
<comment type="interaction">
    <interactant intactId="EBI-702665">
        <id>P02724</id>
    </interactant>
    <interactant intactId="EBI-7576138">
        <id>P02730</id>
        <label>SLC4A1</label>
    </interactant>
    <organismsDiffer>false</organismsDiffer>
    <experiments>5</experiments>
</comment>
<comment type="interaction">
    <interactant intactId="EBI-702665">
        <id>P02724</id>
    </interactant>
    <interactant intactId="EBI-12947623">
        <id>Q96MV1</id>
        <label>TLCD4</label>
    </interactant>
    <organismsDiffer>false</organismsDiffer>
    <experiments>3</experiments>
</comment>
<comment type="interaction">
    <interactant intactId="EBI-702665">
        <id>P02724</id>
    </interactant>
    <interactant intactId="EBI-1045825">
        <id>P55061</id>
        <label>TMBIM6</label>
    </interactant>
    <organismsDiffer>false</organismsDiffer>
    <experiments>3</experiments>
</comment>
<comment type="interaction">
    <interactant intactId="EBI-702665">
        <id>P02724</id>
    </interactant>
    <interactant intactId="EBI-8638294">
        <id>Q9NUH8</id>
        <label>TMEM14B</label>
    </interactant>
    <organismsDiffer>false</organismsDiffer>
    <experiments>3</experiments>
</comment>
<comment type="interaction">
    <interactant intactId="EBI-702665">
        <id>P02724</id>
    </interactant>
    <interactant intactId="EBI-13329239">
        <id>Q6P9G4</id>
        <label>TMEM154</label>
    </interactant>
    <organismsDiffer>false</organismsDiffer>
    <experiments>3</experiments>
</comment>
<comment type="interaction">
    <interactant intactId="EBI-702665">
        <id>P02724</id>
    </interactant>
    <interactant intactId="EBI-10982110">
        <id>Q96Q45-2</id>
        <label>TMEM237</label>
    </interactant>
    <organismsDiffer>false</organismsDiffer>
    <experiments>3</experiments>
</comment>
<comment type="interaction">
    <interactant intactId="EBI-702665">
        <id>P02724</id>
    </interactant>
    <interactant intactId="EBI-25648284">
        <id>V9XTM1</id>
        <label>EBA-175</label>
    </interactant>
    <organismsDiffer>true</organismsDiffer>
    <experiments>2</experiments>
</comment>
<comment type="interaction">
    <interactant intactId="EBI-702665">
        <id>P02724</id>
    </interactant>
    <interactant intactId="EBI-25648255">
        <id>Q9N9G9</id>
        <label>EBP</label>
    </interactant>
    <organismsDiffer>true</organismsDiffer>
    <experiments>2</experiments>
</comment>
<comment type="interaction">
    <interactant intactId="EBI-702665">
        <id>P02724</id>
    </interactant>
    <interactant intactId="EBI-781633">
        <id>Q8IBE8</id>
        <label>PF3D7_0731500</label>
    </interactant>
    <organismsDiffer>true</organismsDiffer>
    <experiments>2</experiments>
</comment>
<comment type="subcellular location">
    <subcellularLocation>
        <location evidence="9">Cell membrane</location>
        <topology evidence="9">Single-pass type I membrane protein</topology>
    </subcellularLocation>
    <text>Appears to be colocalized with SLC4A1.</text>
</comment>
<comment type="alternative products">
    <event type="alternative splicing"/>
    <isoform>
        <id>P02724-1</id>
        <name>1</name>
        <sequence type="displayed"/>
    </isoform>
    <isoform>
        <id>P02724-2</id>
        <name>2</name>
        <sequence type="described" ref="VSP_047822"/>
    </isoform>
    <isoform>
        <id>P02724-3</id>
        <name>3</name>
        <sequence type="described" ref="VSP_047823"/>
    </isoform>
</comment>
<comment type="PTM">
    <text evidence="6 15 28 30 36">The major O-linked glycan are NeuAc-alpha-(2-3)-Gal-beta-(1-3)-[NeuAc-alpha-(2-6)]-GalNAcOH (about 78 %) and NeuAc-alpha-(2-3)-Gal-beta-(1-3)-GalNAcOH (17 %). Minor O-glycans (5 %) include NeuAc-alpha-(2-3)-Gal-beta-(1-3)-[NeuAc-alpha-(2-6)]-GalNAcOH NeuAc-alpha-(2-8)-NeuAc-alpha-(2-3)-Gal-beta-(1-3)-GalNAcOH. About 1% of all O-linked glycans carry blood group A, B and H determinants. They derive from a type-2 precursor core structure, Gal-beta-(1,3)-GlcNAc-beta-1-R, and the antigens are synthesized by addition of fucose (H antigen-specific) and then N-acetylgalactosamine (A antigen-specific) or galactose (B antigen-specific). Specifically O-linked-glycans are NeuAc-alpha-(2-3)-Gal-beta-(1-3)-GalNAcOH-(6-1)-GlcNAc-beta-(4-1)-[Fuc-alpha-(1-2)]-Gal-beta-(3-1)-GalNAc-alpha (about 1%, B antigen-specific) and NeuAc-alpha-(2-3)-Gal-beta-(1-3)-GalNAcOH-(6-1)-GlcNAc-beta-(4-1)-[Fuc-alpha-(1-2)]-Gal-beta (1 %, O antigen-, A antigen- and B antigen-specific).</text>
</comment>
<comment type="polymorphism">
    <text>Along with GYPB, GYPA is responsible for the MNS blood group system [MIM:111300]. The molecular basis of the GPA M/N bloodgroup antigen is a variation at positions 20 and 24. Ser-20 and Gly-24 correspond to M; 'Leu-20' and 'Glu-24' correspond to N (shown).</text>
</comment>
<comment type="polymorphism">
    <text>GYPA polymorphisms are involved in resistance to malaria [MIM:611162].</text>
</comment>
<comment type="miscellaneous">
    <text>Involved in several unequal homologous recombinations or gene conversion events, predominantly with GYPB and more rarely with GYPE. The resulting fusion proteins are observed in different phenotypes and encode low incidence bloodgroup antigens.</text>
</comment>
<comment type="similarity">
    <text evidence="38">Belongs to the glycophorin A family.</text>
</comment>
<comment type="sequence caution" evidence="38">
    <conflict type="erroneous initiation">
        <sequence resource="EMBL-CDS" id="AAA52624"/>
    </conflict>
</comment>
<evidence type="ECO:0000256" key="1">
    <source>
        <dbReference type="SAM" id="MobiDB-lite"/>
    </source>
</evidence>
<evidence type="ECO:0000269" key="2">
    <source>
    </source>
</evidence>
<evidence type="ECO:0000269" key="3">
    <source>
    </source>
</evidence>
<evidence type="ECO:0000269" key="4">
    <source>
    </source>
</evidence>
<evidence type="ECO:0000269" key="5">
    <source>
    </source>
</evidence>
<evidence type="ECO:0000269" key="6">
    <source>
    </source>
</evidence>
<evidence type="ECO:0000269" key="7">
    <source>
    </source>
</evidence>
<evidence type="ECO:0000269" key="8">
    <source>
    </source>
</evidence>
<evidence type="ECO:0000269" key="9">
    <source>
    </source>
</evidence>
<evidence type="ECO:0000269" key="10">
    <source>
    </source>
</evidence>
<evidence type="ECO:0000269" key="11">
    <source>
    </source>
</evidence>
<evidence type="ECO:0000269" key="12">
    <source>
    </source>
</evidence>
<evidence type="ECO:0000269" key="13">
    <source>
    </source>
</evidence>
<evidence type="ECO:0000269" key="14">
    <source>
    </source>
</evidence>
<evidence type="ECO:0000269" key="15">
    <source>
    </source>
</evidence>
<evidence type="ECO:0000269" key="16">
    <source>
    </source>
</evidence>
<evidence type="ECO:0000269" key="17">
    <source>
    </source>
</evidence>
<evidence type="ECO:0000269" key="18">
    <source>
    </source>
</evidence>
<evidence type="ECO:0000269" key="19">
    <source>
    </source>
</evidence>
<evidence type="ECO:0000269" key="20">
    <source>
    </source>
</evidence>
<evidence type="ECO:0000269" key="21">
    <source>
    </source>
</evidence>
<evidence type="ECO:0000269" key="22">
    <source>
    </source>
</evidence>
<evidence type="ECO:0000269" key="23">
    <source>
    </source>
</evidence>
<evidence type="ECO:0000269" key="24">
    <source>
    </source>
</evidence>
<evidence type="ECO:0000269" key="25">
    <source>
    </source>
</evidence>
<evidence type="ECO:0000269" key="26">
    <source>
    </source>
</evidence>
<evidence type="ECO:0000269" key="27">
    <source>
    </source>
</evidence>
<evidence type="ECO:0000269" key="28">
    <source>
    </source>
</evidence>
<evidence type="ECO:0000269" key="29">
    <source>
    </source>
</evidence>
<evidence type="ECO:0000269" key="30">
    <source>
    </source>
</evidence>
<evidence type="ECO:0000269" key="31">
    <source>
    </source>
</evidence>
<evidence type="ECO:0000269" key="32">
    <source>
    </source>
</evidence>
<evidence type="ECO:0000269" key="33">
    <source>
    </source>
</evidence>
<evidence type="ECO:0000269" key="34">
    <source>
    </source>
</evidence>
<evidence type="ECO:0000269" key="35">
    <source>
    </source>
</evidence>
<evidence type="ECO:0000269" key="36">
    <source>
    </source>
</evidence>
<evidence type="ECO:0000303" key="37">
    <source ref="6"/>
</evidence>
<evidence type="ECO:0000305" key="38"/>
<evidence type="ECO:0000312" key="39">
    <source>
        <dbReference type="HGNC" id="HGNC:4702"/>
    </source>
</evidence>
<evidence type="ECO:0007744" key="40">
    <source>
        <dbReference type="PDB" id="7UZ3"/>
    </source>
</evidence>
<evidence type="ECO:0007744" key="41">
    <source>
        <dbReference type="PDB" id="7V07"/>
    </source>
</evidence>
<evidence type="ECO:0007744" key="42">
    <source>
        <dbReference type="PDB" id="7V0K"/>
    </source>
</evidence>
<evidence type="ECO:0007744" key="43">
    <source>
        <dbReference type="PDB" id="7V19"/>
    </source>
</evidence>
<evidence type="ECO:0007744" key="44">
    <source>
        <dbReference type="PDB" id="8CRQ"/>
    </source>
</evidence>
<evidence type="ECO:0007744" key="45">
    <source>
        <dbReference type="PDB" id="8CRR"/>
    </source>
</evidence>
<evidence type="ECO:0007744" key="46">
    <source>
        <dbReference type="PDB" id="8CRT"/>
    </source>
</evidence>
<evidence type="ECO:0007744" key="47">
    <source>
        <dbReference type="PDB" id="8CS9"/>
    </source>
</evidence>
<evidence type="ECO:0007744" key="48">
    <source>
        <dbReference type="PDB" id="8CSL"/>
    </source>
</evidence>
<evidence type="ECO:0007744" key="49">
    <source>
        <dbReference type="PDB" id="8CT3"/>
    </source>
</evidence>
<evidence type="ECO:0007744" key="50">
    <source>
        <dbReference type="PDB" id="8CTE"/>
    </source>
</evidence>
<evidence type="ECO:0007744" key="51">
    <source>
    </source>
</evidence>
<evidence type="ECO:0007829" key="52">
    <source>
        <dbReference type="PDB" id="2KPF"/>
    </source>
</evidence>
<evidence type="ECO:0007829" key="53">
    <source>
        <dbReference type="PDB" id="5EH6"/>
    </source>
</evidence>
<proteinExistence type="evidence at protein level"/>
<organism>
    <name type="scientific">Homo sapiens</name>
    <name type="common">Human</name>
    <dbReference type="NCBI Taxonomy" id="9606"/>
    <lineage>
        <taxon>Eukaryota</taxon>
        <taxon>Metazoa</taxon>
        <taxon>Chordata</taxon>
        <taxon>Craniata</taxon>
        <taxon>Vertebrata</taxon>
        <taxon>Euteleostomi</taxon>
        <taxon>Mammalia</taxon>
        <taxon>Eutheria</taxon>
        <taxon>Euarchontoglires</taxon>
        <taxon>Primates</taxon>
        <taxon>Haplorrhini</taxon>
        <taxon>Catarrhini</taxon>
        <taxon>Hominidae</taxon>
        <taxon>Homo</taxon>
    </lineage>
</organism>
<protein>
    <recommendedName>
        <fullName evidence="38">Glycophorin-A</fullName>
    </recommendedName>
    <alternativeName>
        <fullName>MN sialoglycoprotein</fullName>
    </alternativeName>
    <alternativeName>
        <fullName>PAS-2</fullName>
    </alternativeName>
    <alternativeName>
        <fullName>Sialoglycoprotein alpha</fullName>
    </alternativeName>
    <cdAntigenName>CD235a</cdAntigenName>
</protein>
<sequence>MYGKIIFVLLLSEIVSISALSTTEVAMHTSTSSSVTKSYISSQTNDTHKRDTYAATPRAHEVSEISVRTVYPPEEETGERVQLAHHFSEPEITLIIFGVMAGVIGTILLISYGIRRLIKKSPSDVKPLPSPDTDVPLSSVEIENPETSDQ</sequence>